<gene>
    <name evidence="1" type="primary">rsbW</name>
    <name type="ordered locus">SE_1669</name>
</gene>
<comment type="function">
    <text evidence="1">Negative regulator of sigma-B activity. Phosphorylates and inactivates its specific antagonist protein, RsbV. Upon phosphorylation of RsbV, RsbW is released and binds to sigma-B, thereby blocking its ability to form an RNA polymerase holoenzyme (E-sigma-B).</text>
</comment>
<comment type="catalytic activity">
    <reaction evidence="1">
        <text>L-seryl-[protein] + ATP = O-phospho-L-seryl-[protein] + ADP + H(+)</text>
        <dbReference type="Rhea" id="RHEA:17989"/>
        <dbReference type="Rhea" id="RHEA-COMP:9863"/>
        <dbReference type="Rhea" id="RHEA-COMP:11604"/>
        <dbReference type="ChEBI" id="CHEBI:15378"/>
        <dbReference type="ChEBI" id="CHEBI:29999"/>
        <dbReference type="ChEBI" id="CHEBI:30616"/>
        <dbReference type="ChEBI" id="CHEBI:83421"/>
        <dbReference type="ChEBI" id="CHEBI:456216"/>
        <dbReference type="EC" id="2.7.11.1"/>
    </reaction>
</comment>
<comment type="catalytic activity">
    <reaction evidence="1">
        <text>L-threonyl-[protein] + ATP = O-phospho-L-threonyl-[protein] + ADP + H(+)</text>
        <dbReference type="Rhea" id="RHEA:46608"/>
        <dbReference type="Rhea" id="RHEA-COMP:11060"/>
        <dbReference type="Rhea" id="RHEA-COMP:11605"/>
        <dbReference type="ChEBI" id="CHEBI:15378"/>
        <dbReference type="ChEBI" id="CHEBI:30013"/>
        <dbReference type="ChEBI" id="CHEBI:30616"/>
        <dbReference type="ChEBI" id="CHEBI:61977"/>
        <dbReference type="ChEBI" id="CHEBI:456216"/>
        <dbReference type="EC" id="2.7.11.1"/>
    </reaction>
</comment>
<comment type="similarity">
    <text evidence="1">Belongs to the anti-sigma-factor family.</text>
</comment>
<reference key="1">
    <citation type="journal article" date="2003" name="Mol. Microbiol.">
        <title>Genome-based analysis of virulence genes in a non-biofilm-forming Staphylococcus epidermidis strain (ATCC 12228).</title>
        <authorList>
            <person name="Zhang Y.-Q."/>
            <person name="Ren S.-X."/>
            <person name="Li H.-L."/>
            <person name="Wang Y.-X."/>
            <person name="Fu G."/>
            <person name="Yang J."/>
            <person name="Qin Z.-Q."/>
            <person name="Miao Y.-G."/>
            <person name="Wang W.-Y."/>
            <person name="Chen R.-S."/>
            <person name="Shen Y."/>
            <person name="Chen Z."/>
            <person name="Yuan Z.-H."/>
            <person name="Zhao G.-P."/>
            <person name="Qu D."/>
            <person name="Danchin A."/>
            <person name="Wen Y.-M."/>
        </authorList>
    </citation>
    <scope>NUCLEOTIDE SEQUENCE [LARGE SCALE GENOMIC DNA]</scope>
    <source>
        <strain>ATCC 12228 / FDA PCI 1200</strain>
    </source>
</reference>
<proteinExistence type="inferred from homology"/>
<protein>
    <recommendedName>
        <fullName evidence="1">Serine-protein kinase RsbW</fullName>
        <ecNumber evidence="1">2.7.11.1</ecNumber>
    </recommendedName>
    <alternativeName>
        <fullName evidence="1">Anti-sigma-B factor</fullName>
    </alternativeName>
    <alternativeName>
        <fullName evidence="1">Sigma-B negative effector RsbW</fullName>
    </alternativeName>
</protein>
<sequence>MQSTQDYIEMRLPASAEYVSLIRLTLSGVFSRAGASYDDIEDSKIAVSEAVTNAVKHAYKKNSEIGMINLCFEIFDDRIKIVISDQGESFDYEATKSHLGPYNDNENIDFLREGGLGLFLIESLMDEVTVYKESGVTISMIKYIKKEQVRNNGERVEIS</sequence>
<name>RSBW_STAES</name>
<accession>P0C0M7</accession>
<accession>Q8VSV5</accession>
<accession>Q9F7V2</accession>
<feature type="chain" id="PRO_0000203546" description="Serine-protein kinase RsbW">
    <location>
        <begin position="1"/>
        <end position="159"/>
    </location>
</feature>
<organism>
    <name type="scientific">Staphylococcus epidermidis (strain ATCC 12228 / FDA PCI 1200)</name>
    <dbReference type="NCBI Taxonomy" id="176280"/>
    <lineage>
        <taxon>Bacteria</taxon>
        <taxon>Bacillati</taxon>
        <taxon>Bacillota</taxon>
        <taxon>Bacilli</taxon>
        <taxon>Bacillales</taxon>
        <taxon>Staphylococcaceae</taxon>
        <taxon>Staphylococcus</taxon>
    </lineage>
</organism>
<evidence type="ECO:0000255" key="1">
    <source>
        <dbReference type="HAMAP-Rule" id="MF_00638"/>
    </source>
</evidence>
<dbReference type="EC" id="2.7.11.1" evidence="1"/>
<dbReference type="EMBL" id="AE015929">
    <property type="protein sequence ID" value="AAO05268.1"/>
    <property type="molecule type" value="Genomic_DNA"/>
</dbReference>
<dbReference type="RefSeq" id="NP_765224.1">
    <property type="nucleotide sequence ID" value="NC_004461.1"/>
</dbReference>
<dbReference type="RefSeq" id="WP_001829903.1">
    <property type="nucleotide sequence ID" value="NZ_WBME01000071.1"/>
</dbReference>
<dbReference type="SMR" id="P0C0M7"/>
<dbReference type="GeneID" id="50018230"/>
<dbReference type="KEGG" id="sep:SE_1669"/>
<dbReference type="PATRIC" id="fig|176280.10.peg.1630"/>
<dbReference type="eggNOG" id="COG2172">
    <property type="taxonomic scope" value="Bacteria"/>
</dbReference>
<dbReference type="HOGENOM" id="CLU_090336_11_1_9"/>
<dbReference type="OrthoDB" id="9798941at2"/>
<dbReference type="Proteomes" id="UP000001411">
    <property type="component" value="Chromosome"/>
</dbReference>
<dbReference type="GO" id="GO:0005524">
    <property type="term" value="F:ATP binding"/>
    <property type="evidence" value="ECO:0007669"/>
    <property type="project" value="UniProtKB-KW"/>
</dbReference>
<dbReference type="GO" id="GO:0106310">
    <property type="term" value="F:protein serine kinase activity"/>
    <property type="evidence" value="ECO:0007669"/>
    <property type="project" value="RHEA"/>
</dbReference>
<dbReference type="GO" id="GO:0004674">
    <property type="term" value="F:protein serine/threonine kinase activity"/>
    <property type="evidence" value="ECO:0007669"/>
    <property type="project" value="UniProtKB-KW"/>
</dbReference>
<dbReference type="GO" id="GO:0016989">
    <property type="term" value="F:sigma factor antagonist activity"/>
    <property type="evidence" value="ECO:0007669"/>
    <property type="project" value="InterPro"/>
</dbReference>
<dbReference type="CDD" id="cd16936">
    <property type="entry name" value="HATPase_RsbW-like"/>
    <property type="match status" value="1"/>
</dbReference>
<dbReference type="Gene3D" id="3.30.565.10">
    <property type="entry name" value="Histidine kinase-like ATPase, C-terminal domain"/>
    <property type="match status" value="1"/>
</dbReference>
<dbReference type="HAMAP" id="MF_00638">
    <property type="entry name" value="Anti_sigma_B"/>
    <property type="match status" value="1"/>
</dbReference>
<dbReference type="InterPro" id="IPR050267">
    <property type="entry name" value="Anti-sigma-factor_SerPK"/>
</dbReference>
<dbReference type="InterPro" id="IPR036890">
    <property type="entry name" value="HATPase_C_sf"/>
</dbReference>
<dbReference type="InterPro" id="IPR010193">
    <property type="entry name" value="RsbW"/>
</dbReference>
<dbReference type="NCBIfam" id="NF003144">
    <property type="entry name" value="PRK04069.1"/>
    <property type="match status" value="1"/>
</dbReference>
<dbReference type="NCBIfam" id="TIGR01924">
    <property type="entry name" value="rsbW_low_gc"/>
    <property type="match status" value="1"/>
</dbReference>
<dbReference type="PANTHER" id="PTHR35526">
    <property type="entry name" value="ANTI-SIGMA-F FACTOR RSBW-RELATED"/>
    <property type="match status" value="1"/>
</dbReference>
<dbReference type="PANTHER" id="PTHR35526:SF9">
    <property type="entry name" value="SERINE-PROTEIN KINASE RSBW"/>
    <property type="match status" value="1"/>
</dbReference>
<dbReference type="Pfam" id="PF13581">
    <property type="entry name" value="HATPase_c_2"/>
    <property type="match status" value="1"/>
</dbReference>
<dbReference type="SUPFAM" id="SSF55874">
    <property type="entry name" value="ATPase domain of HSP90 chaperone/DNA topoisomerase II/histidine kinase"/>
    <property type="match status" value="1"/>
</dbReference>
<keyword id="KW-0067">ATP-binding</keyword>
<keyword id="KW-0418">Kinase</keyword>
<keyword id="KW-0547">Nucleotide-binding</keyword>
<keyword id="KW-0723">Serine/threonine-protein kinase</keyword>
<keyword id="KW-0808">Transferase</keyword>